<evidence type="ECO:0000269" key="1">
    <source>
    </source>
</evidence>
<evidence type="ECO:0000269" key="2">
    <source>
    </source>
</evidence>
<evidence type="ECO:0000269" key="3">
    <source>
    </source>
</evidence>
<evidence type="ECO:0000269" key="4">
    <source>
    </source>
</evidence>
<evidence type="ECO:0000269" key="5">
    <source>
    </source>
</evidence>
<evidence type="ECO:0000269" key="6">
    <source>
    </source>
</evidence>
<evidence type="ECO:0000269" key="7">
    <source>
    </source>
</evidence>
<evidence type="ECO:0000269" key="8">
    <source>
    </source>
</evidence>
<evidence type="ECO:0000303" key="9">
    <source>
    </source>
</evidence>
<evidence type="ECO:0000303" key="10">
    <source>
    </source>
</evidence>
<evidence type="ECO:0000305" key="11"/>
<evidence type="ECO:0000305" key="12">
    <source>
    </source>
</evidence>
<evidence type="ECO:0000305" key="13">
    <source>
    </source>
</evidence>
<evidence type="ECO:0007744" key="14">
    <source>
    </source>
</evidence>
<evidence type="ECO:0007744" key="15">
    <source>
    </source>
</evidence>
<evidence type="ECO:0007744" key="16">
    <source>
    </source>
</evidence>
<organism>
    <name type="scientific">Saccharomyces cerevisiae (strain ATCC 204508 / S288c)</name>
    <name type="common">Baker's yeast</name>
    <dbReference type="NCBI Taxonomy" id="559292"/>
    <lineage>
        <taxon>Eukaryota</taxon>
        <taxon>Fungi</taxon>
        <taxon>Dikarya</taxon>
        <taxon>Ascomycota</taxon>
        <taxon>Saccharomycotina</taxon>
        <taxon>Saccharomycetes</taxon>
        <taxon>Saccharomycetales</taxon>
        <taxon>Saccharomycetaceae</taxon>
        <taxon>Saccharomyces</taxon>
    </lineage>
</organism>
<dbReference type="EMBL" id="X51519">
    <property type="protein sequence ID" value="CAA35891.1"/>
    <property type="molecule type" value="Genomic_DNA"/>
</dbReference>
<dbReference type="EMBL" id="U18795">
    <property type="protein sequence ID" value="AAB65033.1"/>
    <property type="molecule type" value="Genomic_DNA"/>
</dbReference>
<dbReference type="EMBL" id="AY693201">
    <property type="protein sequence ID" value="AAT93220.1"/>
    <property type="molecule type" value="Genomic_DNA"/>
</dbReference>
<dbReference type="EMBL" id="BK006939">
    <property type="protein sequence ID" value="DAA07600.1"/>
    <property type="molecule type" value="Genomic_DNA"/>
</dbReference>
<dbReference type="PIR" id="S13665">
    <property type="entry name" value="S13665"/>
</dbReference>
<dbReference type="RefSeq" id="NP_010860.1">
    <property type="nucleotide sequence ID" value="NM_001178869.1"/>
</dbReference>
<dbReference type="PDB" id="3J16">
    <property type="method" value="EM"/>
    <property type="chains" value="H=1-165"/>
</dbReference>
<dbReference type="PDB" id="3J77">
    <property type="method" value="EM"/>
    <property type="resolution" value="6.20 A"/>
    <property type="chains" value="62=1-165"/>
</dbReference>
<dbReference type="PDB" id="3J78">
    <property type="method" value="EM"/>
    <property type="resolution" value="6.30 A"/>
    <property type="chains" value="62=1-165"/>
</dbReference>
<dbReference type="PDB" id="4V4B">
    <property type="method" value="EM"/>
    <property type="resolution" value="11.70 A"/>
    <property type="chains" value="BK=13-143"/>
</dbReference>
<dbReference type="PDB" id="4V5Z">
    <property type="method" value="EM"/>
    <property type="resolution" value="8.70 A"/>
    <property type="chains" value="Bi=1-163"/>
</dbReference>
<dbReference type="PDB" id="4V6I">
    <property type="method" value="EM"/>
    <property type="resolution" value="8.80 A"/>
    <property type="chains" value="BJ=1-165"/>
</dbReference>
<dbReference type="PDB" id="4V7F">
    <property type="method" value="EM"/>
    <property type="resolution" value="8.70 A"/>
    <property type="chains" value="I=1-165"/>
</dbReference>
<dbReference type="PDB" id="4V7R">
    <property type="method" value="X-ray"/>
    <property type="resolution" value="4.00 A"/>
    <property type="chains" value="DL=1-165"/>
</dbReference>
<dbReference type="PDB" id="5DGE">
    <property type="method" value="X-ray"/>
    <property type="resolution" value="3.45 A"/>
    <property type="chains" value="m2=1-165"/>
</dbReference>
<dbReference type="PDB" id="5DGF">
    <property type="method" value="X-ray"/>
    <property type="resolution" value="3.30 A"/>
    <property type="chains" value="m2=1-165"/>
</dbReference>
<dbReference type="PDB" id="5JCS">
    <property type="method" value="EM"/>
    <property type="resolution" value="9.50 A"/>
    <property type="chains" value="K=1-165"/>
</dbReference>
<dbReference type="PDB" id="5JUO">
    <property type="method" value="EM"/>
    <property type="resolution" value="4.00 A"/>
    <property type="chains" value="P=1-165"/>
</dbReference>
<dbReference type="PDB" id="5JUP">
    <property type="method" value="EM"/>
    <property type="resolution" value="3.50 A"/>
    <property type="chains" value="P=1-165"/>
</dbReference>
<dbReference type="PDB" id="5JUS">
    <property type="method" value="EM"/>
    <property type="resolution" value="4.20 A"/>
    <property type="chains" value="P=1-165"/>
</dbReference>
<dbReference type="PDB" id="5JUT">
    <property type="method" value="EM"/>
    <property type="resolution" value="4.00 A"/>
    <property type="chains" value="P=1-165"/>
</dbReference>
<dbReference type="PDB" id="5JUU">
    <property type="method" value="EM"/>
    <property type="resolution" value="4.00 A"/>
    <property type="chains" value="P=1-165"/>
</dbReference>
<dbReference type="PDB" id="5TGM">
    <property type="method" value="X-ray"/>
    <property type="resolution" value="3.50 A"/>
    <property type="chains" value="m2=1-165"/>
</dbReference>
<dbReference type="PDB" id="6GQ1">
    <property type="method" value="EM"/>
    <property type="resolution" value="4.40 A"/>
    <property type="chains" value="P2=54-147"/>
</dbReference>
<dbReference type="PDB" id="6GQB">
    <property type="method" value="EM"/>
    <property type="resolution" value="3.90 A"/>
    <property type="chains" value="P2=54-147"/>
</dbReference>
<dbReference type="PDB" id="6GQV">
    <property type="method" value="EM"/>
    <property type="resolution" value="4.00 A"/>
    <property type="chains" value="P2=54-147"/>
</dbReference>
<dbReference type="PDB" id="6N8J">
    <property type="method" value="EM"/>
    <property type="resolution" value="3.50 A"/>
    <property type="chains" value="K=1-110"/>
</dbReference>
<dbReference type="PDB" id="6N8M">
    <property type="method" value="EM"/>
    <property type="resolution" value="3.50 A"/>
    <property type="chains" value="L=1-110"/>
</dbReference>
<dbReference type="PDB" id="6N8N">
    <property type="method" value="EM"/>
    <property type="resolution" value="3.80 A"/>
    <property type="chains" value="L=1-110"/>
</dbReference>
<dbReference type="PDB" id="6N8O">
    <property type="method" value="EM"/>
    <property type="resolution" value="3.50 A"/>
    <property type="chains" value="L=1-110"/>
</dbReference>
<dbReference type="PDB" id="6OIG">
    <property type="method" value="EM"/>
    <property type="resolution" value="3.80 A"/>
    <property type="chains" value="s=9-163"/>
</dbReference>
<dbReference type="PDB" id="6R84">
    <property type="method" value="EM"/>
    <property type="resolution" value="3.60 A"/>
    <property type="chains" value="P=9-163"/>
</dbReference>
<dbReference type="PDB" id="6R86">
    <property type="method" value="EM"/>
    <property type="resolution" value="3.40 A"/>
    <property type="chains" value="P=9-163"/>
</dbReference>
<dbReference type="PDB" id="6R87">
    <property type="method" value="EM"/>
    <property type="resolution" value="3.40 A"/>
    <property type="chains" value="P=9-163"/>
</dbReference>
<dbReference type="PDB" id="6YLG">
    <property type="method" value="EM"/>
    <property type="resolution" value="3.00 A"/>
    <property type="chains" value="q=1-165"/>
</dbReference>
<dbReference type="PDB" id="6YLH">
    <property type="method" value="EM"/>
    <property type="resolution" value="3.10 A"/>
    <property type="chains" value="q=1-165"/>
</dbReference>
<dbReference type="PDB" id="7UG6">
    <property type="method" value="EM"/>
    <property type="resolution" value="2.90 A"/>
    <property type="chains" value="q=1-165"/>
</dbReference>
<dbReference type="PDB" id="7UOO">
    <property type="method" value="EM"/>
    <property type="resolution" value="2.34 A"/>
    <property type="chains" value="8=1-165"/>
</dbReference>
<dbReference type="PDB" id="7UQB">
    <property type="method" value="EM"/>
    <property type="resolution" value="2.43 A"/>
    <property type="chains" value="8=1-165"/>
</dbReference>
<dbReference type="PDB" id="7UQZ">
    <property type="method" value="EM"/>
    <property type="resolution" value="2.44 A"/>
    <property type="chains" value="8=1-165"/>
</dbReference>
<dbReference type="PDB" id="7V08">
    <property type="method" value="EM"/>
    <property type="resolution" value="2.36 A"/>
    <property type="chains" value="8=1-165"/>
</dbReference>
<dbReference type="PDB" id="7Z34">
    <property type="method" value="EM"/>
    <property type="resolution" value="3.80 A"/>
    <property type="chains" value="a=1-165"/>
</dbReference>
<dbReference type="PDB" id="8AAF">
    <property type="method" value="EM"/>
    <property type="resolution" value="2.50 A"/>
    <property type="chains" value="z=1-165"/>
</dbReference>
<dbReference type="PDB" id="8AGT">
    <property type="method" value="EM"/>
    <property type="resolution" value="2.60 A"/>
    <property type="chains" value="z=1-165"/>
</dbReference>
<dbReference type="PDB" id="8AGW">
    <property type="method" value="EM"/>
    <property type="resolution" value="2.60 A"/>
    <property type="chains" value="z=1-165"/>
</dbReference>
<dbReference type="PDB" id="8AGX">
    <property type="method" value="EM"/>
    <property type="resolution" value="2.40 A"/>
    <property type="chains" value="z=1-165"/>
</dbReference>
<dbReference type="PDB" id="8AGZ">
    <property type="method" value="EM"/>
    <property type="resolution" value="2.60 A"/>
    <property type="chains" value="z=1-165"/>
</dbReference>
<dbReference type="PDB" id="8CCS">
    <property type="method" value="EM"/>
    <property type="resolution" value="1.97 A"/>
    <property type="chains" value="Ee=1-165"/>
</dbReference>
<dbReference type="PDB" id="8CDL">
    <property type="method" value="EM"/>
    <property type="resolution" value="2.72 A"/>
    <property type="chains" value="Ee=1-165"/>
</dbReference>
<dbReference type="PDB" id="8CDR">
    <property type="method" value="EM"/>
    <property type="resolution" value="2.04 A"/>
    <property type="chains" value="Ee=1-165"/>
</dbReference>
<dbReference type="PDB" id="8CEH">
    <property type="method" value="EM"/>
    <property type="resolution" value="2.05 A"/>
    <property type="chains" value="Ee=1-165"/>
</dbReference>
<dbReference type="PDB" id="8CF5">
    <property type="method" value="EM"/>
    <property type="resolution" value="2.71 A"/>
    <property type="chains" value="Ee=1-165"/>
</dbReference>
<dbReference type="PDB" id="8CG8">
    <property type="method" value="EM"/>
    <property type="resolution" value="2.57 A"/>
    <property type="chains" value="Ee=1-165"/>
</dbReference>
<dbReference type="PDB" id="8CGN">
    <property type="method" value="EM"/>
    <property type="resolution" value="2.28 A"/>
    <property type="chains" value="Ee=1-165"/>
</dbReference>
<dbReference type="PDB" id="8CIV">
    <property type="method" value="EM"/>
    <property type="resolution" value="2.47 A"/>
    <property type="chains" value="Ee=1-165"/>
</dbReference>
<dbReference type="PDB" id="8CKU">
    <property type="method" value="EM"/>
    <property type="resolution" value="3.11 A"/>
    <property type="chains" value="Ee=1-165"/>
</dbReference>
<dbReference type="PDB" id="8CMJ">
    <property type="method" value="EM"/>
    <property type="resolution" value="3.79 A"/>
    <property type="chains" value="Ee=1-165"/>
</dbReference>
<dbReference type="PDB" id="8HFR">
    <property type="method" value="EM"/>
    <property type="resolution" value="2.64 A"/>
    <property type="chains" value="KM=1-165"/>
</dbReference>
<dbReference type="PDB" id="8K2D">
    <property type="method" value="EM"/>
    <property type="resolution" value="3.20 A"/>
    <property type="chains" value="LK=1-165"/>
</dbReference>
<dbReference type="PDB" id="8K82">
    <property type="method" value="EM"/>
    <property type="resolution" value="3.00 A"/>
    <property type="chains" value="LK=1-165"/>
</dbReference>
<dbReference type="PDB" id="8Y0U">
    <property type="method" value="EM"/>
    <property type="resolution" value="3.59 A"/>
    <property type="chains" value="P2=1-165"/>
</dbReference>
<dbReference type="PDB" id="9F9S">
    <property type="method" value="EM"/>
    <property type="resolution" value="2.90 A"/>
    <property type="chains" value="MP=1-165"/>
</dbReference>
<dbReference type="PDBsum" id="3J16"/>
<dbReference type="PDBsum" id="3J77"/>
<dbReference type="PDBsum" id="3J78"/>
<dbReference type="PDBsum" id="4V4B"/>
<dbReference type="PDBsum" id="4V5Z"/>
<dbReference type="PDBsum" id="4V6I"/>
<dbReference type="PDBsum" id="4V7F"/>
<dbReference type="PDBsum" id="4V7R"/>
<dbReference type="PDBsum" id="5DGE"/>
<dbReference type="PDBsum" id="5DGF"/>
<dbReference type="PDBsum" id="5JCS"/>
<dbReference type="PDBsum" id="5JUO"/>
<dbReference type="PDBsum" id="5JUP"/>
<dbReference type="PDBsum" id="5JUS"/>
<dbReference type="PDBsum" id="5JUT"/>
<dbReference type="PDBsum" id="5JUU"/>
<dbReference type="PDBsum" id="5TGM"/>
<dbReference type="PDBsum" id="6GQ1"/>
<dbReference type="PDBsum" id="6GQB"/>
<dbReference type="PDBsum" id="6GQV"/>
<dbReference type="PDBsum" id="6N8J"/>
<dbReference type="PDBsum" id="6N8M"/>
<dbReference type="PDBsum" id="6N8N"/>
<dbReference type="PDBsum" id="6N8O"/>
<dbReference type="PDBsum" id="6OIG"/>
<dbReference type="PDBsum" id="6R84"/>
<dbReference type="PDBsum" id="6R86"/>
<dbReference type="PDBsum" id="6R87"/>
<dbReference type="PDBsum" id="6YLG"/>
<dbReference type="PDBsum" id="6YLH"/>
<dbReference type="PDBsum" id="7UG6"/>
<dbReference type="PDBsum" id="7UOO"/>
<dbReference type="PDBsum" id="7UQB"/>
<dbReference type="PDBsum" id="7UQZ"/>
<dbReference type="PDBsum" id="7V08"/>
<dbReference type="PDBsum" id="7Z34"/>
<dbReference type="PDBsum" id="8AAF"/>
<dbReference type="PDBsum" id="8AGT"/>
<dbReference type="PDBsum" id="8AGW"/>
<dbReference type="PDBsum" id="8AGX"/>
<dbReference type="PDBsum" id="8AGZ"/>
<dbReference type="PDBsum" id="8CCS"/>
<dbReference type="PDBsum" id="8CDL"/>
<dbReference type="PDBsum" id="8CDR"/>
<dbReference type="PDBsum" id="8CEH"/>
<dbReference type="PDBsum" id="8CF5"/>
<dbReference type="PDBsum" id="8CG8"/>
<dbReference type="PDBsum" id="8CGN"/>
<dbReference type="PDBsum" id="8CIV"/>
<dbReference type="PDBsum" id="8CKU"/>
<dbReference type="PDBsum" id="8CMJ"/>
<dbReference type="PDBsum" id="8HFR"/>
<dbReference type="PDBsum" id="8K2D"/>
<dbReference type="PDBsum" id="8K82"/>
<dbReference type="PDBsum" id="8Y0U"/>
<dbReference type="PDBsum" id="9F9S"/>
<dbReference type="EMDB" id="EMD-0047"/>
<dbReference type="EMDB" id="EMD-0048"/>
<dbReference type="EMDB" id="EMD-0049"/>
<dbReference type="EMDB" id="EMD-0369"/>
<dbReference type="EMDB" id="EMD-0372"/>
<dbReference type="EMDB" id="EMD-0373"/>
<dbReference type="EMDB" id="EMD-0374"/>
<dbReference type="EMDB" id="EMD-10838"/>
<dbReference type="EMDB" id="EMD-10839"/>
<dbReference type="EMDB" id="EMD-14471"/>
<dbReference type="EMDB" id="EMD-15423"/>
<dbReference type="EMDB" id="EMD-15426"/>
<dbReference type="EMDB" id="EMD-15427"/>
<dbReference type="EMDB" id="EMD-16563"/>
<dbReference type="EMDB" id="EMD-16591"/>
<dbReference type="EMDB" id="EMD-16594"/>
<dbReference type="EMDB" id="EMD-16609"/>
<dbReference type="EMDB" id="EMD-16616"/>
<dbReference type="EMDB" id="EMD-16634"/>
<dbReference type="EMDB" id="EMD-16648"/>
<dbReference type="EMDB" id="EMD-16684"/>
<dbReference type="EMDB" id="EMD-16702"/>
<dbReference type="EMDB" id="EMD-16729"/>
<dbReference type="EMDB" id="EMD-20077"/>
<dbReference type="EMDB" id="EMD-26485"/>
<dbReference type="EMDB" id="EMD-26651"/>
<dbReference type="EMDB" id="EMD-26686"/>
<dbReference type="EMDB" id="EMD-26703"/>
<dbReference type="EMDB" id="EMD-26941"/>
<dbReference type="EMDB" id="EMD-34725"/>
<dbReference type="EMDB" id="EMD-36839"/>
<dbReference type="EMDB" id="EMD-36945"/>
<dbReference type="EMDB" id="EMD-4751"/>
<dbReference type="EMDB" id="EMD-4752"/>
<dbReference type="EMDB" id="EMD-4753"/>
<dbReference type="EMDB" id="EMD-50259"/>
<dbReference type="SMR" id="P0CX53"/>
<dbReference type="BioGRID" id="32476">
    <property type="interactions" value="204"/>
</dbReference>
<dbReference type="BioGRID" id="36675">
    <property type="interactions" value="229"/>
</dbReference>
<dbReference type="ComplexPortal" id="CPX-1601">
    <property type="entry name" value="60S cytosolic large ribosomal subunit"/>
</dbReference>
<dbReference type="FunCoup" id="P0CX53">
    <property type="interactions" value="1227"/>
</dbReference>
<dbReference type="IntAct" id="P0CX53">
    <property type="interactions" value="7"/>
</dbReference>
<dbReference type="MINT" id="P0CX53"/>
<dbReference type="STRING" id="4932.YDR418W"/>
<dbReference type="iPTMnet" id="P0CX53"/>
<dbReference type="PaxDb" id="4932-YDR418W"/>
<dbReference type="PeptideAtlas" id="P0CX53"/>
<dbReference type="EnsemblFungi" id="YDR418W_mRNA">
    <property type="protein sequence ID" value="YDR418W"/>
    <property type="gene ID" value="YDR418W"/>
</dbReference>
<dbReference type="EnsemblFungi" id="YEL054C_mRNA">
    <property type="protein sequence ID" value="YEL054C"/>
    <property type="gene ID" value="YEL054C"/>
</dbReference>
<dbReference type="GeneID" id="856656"/>
<dbReference type="KEGG" id="sce:YDR418W"/>
<dbReference type="KEGG" id="sce:YEL054C"/>
<dbReference type="AGR" id="SGD:S000000780"/>
<dbReference type="SGD" id="S000000780">
    <property type="gene designation" value="RPL12A"/>
</dbReference>
<dbReference type="VEuPathDB" id="FungiDB:YDR418W"/>
<dbReference type="VEuPathDB" id="FungiDB:YEL054C"/>
<dbReference type="eggNOG" id="KOG0886">
    <property type="taxonomic scope" value="Eukaryota"/>
</dbReference>
<dbReference type="HOGENOM" id="CLU_074237_5_0_1"/>
<dbReference type="InParanoid" id="P0CX53"/>
<dbReference type="OMA" id="QPPHDVI"/>
<dbReference type="OrthoDB" id="1478556at2759"/>
<dbReference type="BioCyc" id="YEAST:G3O-30172-MONOMER"/>
<dbReference type="Reactome" id="R-SCE-156827">
    <property type="pathway name" value="L13a-mediated translational silencing of Ceruloplasmin expression"/>
</dbReference>
<dbReference type="Reactome" id="R-SCE-1799339">
    <property type="pathway name" value="SRP-dependent cotranslational protein targeting to membrane"/>
</dbReference>
<dbReference type="Reactome" id="R-SCE-72689">
    <property type="pathway name" value="Formation of a pool of free 40S subunits"/>
</dbReference>
<dbReference type="Reactome" id="R-SCE-72706">
    <property type="pathway name" value="GTP hydrolysis and joining of the 60S ribosomal subunit"/>
</dbReference>
<dbReference type="Reactome" id="R-SCE-975956">
    <property type="pathway name" value="Nonsense Mediated Decay (NMD) independent of the Exon Junction Complex (EJC)"/>
</dbReference>
<dbReference type="Reactome" id="R-SCE-975957">
    <property type="pathway name" value="Nonsense Mediated Decay (NMD) enhanced by the Exon Junction Complex (EJC)"/>
</dbReference>
<dbReference type="BioGRID-ORCS" id="852026">
    <property type="hits" value="3 hits in 10 CRISPR screens"/>
</dbReference>
<dbReference type="BioGRID-ORCS" id="856656">
    <property type="hits" value="1 hit in 10 CRISPR screens"/>
</dbReference>
<dbReference type="EvolutionaryTrace" id="P0CX53"/>
<dbReference type="PRO" id="PR:P0CX53"/>
<dbReference type="Proteomes" id="UP000002311">
    <property type="component" value="Chromosome V"/>
</dbReference>
<dbReference type="RNAct" id="P0CX53">
    <property type="molecule type" value="protein"/>
</dbReference>
<dbReference type="ExpressionAtlas" id="P0CX53">
    <property type="expression patterns" value="baseline and differential"/>
</dbReference>
<dbReference type="GO" id="GO:0005829">
    <property type="term" value="C:cytosol"/>
    <property type="evidence" value="ECO:0000304"/>
    <property type="project" value="Reactome"/>
</dbReference>
<dbReference type="GO" id="GO:0022625">
    <property type="term" value="C:cytosolic large ribosomal subunit"/>
    <property type="evidence" value="ECO:0000314"/>
    <property type="project" value="SGD"/>
</dbReference>
<dbReference type="GO" id="GO:0070180">
    <property type="term" value="F:large ribosomal subunit rRNA binding"/>
    <property type="evidence" value="ECO:0000318"/>
    <property type="project" value="GO_Central"/>
</dbReference>
<dbReference type="GO" id="GO:0003735">
    <property type="term" value="F:structural constituent of ribosome"/>
    <property type="evidence" value="ECO:0000318"/>
    <property type="project" value="GO_Central"/>
</dbReference>
<dbReference type="GO" id="GO:0002181">
    <property type="term" value="P:cytoplasmic translation"/>
    <property type="evidence" value="ECO:0000305"/>
    <property type="project" value="SGD"/>
</dbReference>
<dbReference type="GO" id="GO:0000027">
    <property type="term" value="P:ribosomal large subunit assembly"/>
    <property type="evidence" value="ECO:0000315"/>
    <property type="project" value="SGD"/>
</dbReference>
<dbReference type="GO" id="GO:0006412">
    <property type="term" value="P:translation"/>
    <property type="evidence" value="ECO:0000318"/>
    <property type="project" value="GO_Central"/>
</dbReference>
<dbReference type="CDD" id="cd00349">
    <property type="entry name" value="Ribosomal_L11"/>
    <property type="match status" value="1"/>
</dbReference>
<dbReference type="FunFam" id="1.10.10.250:FF:000002">
    <property type="entry name" value="60S ribosomal protein L12"/>
    <property type="match status" value="1"/>
</dbReference>
<dbReference type="FunFam" id="3.30.1550.10:FF:000002">
    <property type="entry name" value="60S ribosomal protein L12"/>
    <property type="match status" value="1"/>
</dbReference>
<dbReference type="Gene3D" id="1.10.10.250">
    <property type="entry name" value="Ribosomal protein L11, C-terminal domain"/>
    <property type="match status" value="1"/>
</dbReference>
<dbReference type="Gene3D" id="3.30.1550.10">
    <property type="entry name" value="Ribosomal protein L11/L12, N-terminal domain"/>
    <property type="match status" value="1"/>
</dbReference>
<dbReference type="HAMAP" id="MF_00736">
    <property type="entry name" value="Ribosomal_uL11"/>
    <property type="match status" value="1"/>
</dbReference>
<dbReference type="InterPro" id="IPR000911">
    <property type="entry name" value="Ribosomal_uL11"/>
</dbReference>
<dbReference type="InterPro" id="IPR020783">
    <property type="entry name" value="Ribosomal_uL11_C"/>
</dbReference>
<dbReference type="InterPro" id="IPR036769">
    <property type="entry name" value="Ribosomal_uL11_C_sf"/>
</dbReference>
<dbReference type="InterPro" id="IPR020785">
    <property type="entry name" value="Ribosomal_uL11_CS"/>
</dbReference>
<dbReference type="InterPro" id="IPR020784">
    <property type="entry name" value="Ribosomal_uL11_N"/>
</dbReference>
<dbReference type="InterPro" id="IPR036796">
    <property type="entry name" value="Ribosomal_uL11_N_sf"/>
</dbReference>
<dbReference type="PANTHER" id="PTHR11661">
    <property type="entry name" value="60S RIBOSOMAL PROTEIN L12"/>
    <property type="match status" value="1"/>
</dbReference>
<dbReference type="PANTHER" id="PTHR11661:SF2">
    <property type="entry name" value="LARGE RIBOSOMAL SUBUNIT PROTEIN UL11"/>
    <property type="match status" value="1"/>
</dbReference>
<dbReference type="Pfam" id="PF00298">
    <property type="entry name" value="Ribosomal_L11"/>
    <property type="match status" value="1"/>
</dbReference>
<dbReference type="Pfam" id="PF03946">
    <property type="entry name" value="Ribosomal_L11_N"/>
    <property type="match status" value="1"/>
</dbReference>
<dbReference type="SMART" id="SM00649">
    <property type="entry name" value="RL11"/>
    <property type="match status" value="1"/>
</dbReference>
<dbReference type="SUPFAM" id="SSF54747">
    <property type="entry name" value="Ribosomal L11/L12e N-terminal domain"/>
    <property type="match status" value="1"/>
</dbReference>
<dbReference type="SUPFAM" id="SSF46906">
    <property type="entry name" value="Ribosomal protein L11, C-terminal domain"/>
    <property type="match status" value="1"/>
</dbReference>
<dbReference type="PROSITE" id="PS00359">
    <property type="entry name" value="RIBOSOMAL_L11"/>
    <property type="match status" value="1"/>
</dbReference>
<name>RL12A_YEAST</name>
<comment type="function">
    <text evidence="12">Component of the ribosome, a large ribonucleoprotein complex responsible for the synthesis of proteins in the cell. The small ribosomal subunit (SSU) binds messenger RNAs (mRNAs) and translates the encoded message by selecting cognate aminoacyl-transfer RNA (tRNA) molecules. The large subunit (LSU) contains the ribosomal catalytic site termed the peptidyl transferase center (PTC), which catalyzes the formation of peptide bonds, thereby polymerizing the amino acids delivered by tRNAs into a polypeptide chain. The nascent polypeptides leave the ribosome through a tunnel in the LSU and interact with protein factors that function in enzymatic processing, targeting, and the membrane insertion of nascent chains at the exit of the ribosomal tunnel.</text>
</comment>
<comment type="subunit">
    <text evidence="8 13">Component of the large ribosomal subunit (LSU). Mature yeast ribosomes consist of a small (40S) and a large (60S) subunit. The 40S small subunit contains 1 molecule of ribosomal RNA (18S rRNA) and 33 different proteins (encoded by 57 genes). The large 60S subunit contains 3 rRNA molecules (25S, 5.8S and 5S rRNA) and 46 different proteins (encoded by 81 genes) (PubMed:22096102, PubMed:9559554).</text>
</comment>
<comment type="subcellular location">
    <subcellularLocation>
        <location evidence="3 8">Cytoplasm</location>
    </subcellularLocation>
</comment>
<comment type="PTM">
    <text evidence="1 5 6 7">It appears that the main modified species for L12 contains 6 methyl groups, 2 on Pro-2, 3 on Lys-4 and 1 on Arg-67. Although not reproduced with a second method, methylation at Lys-11 cannot be ruled out.</text>
</comment>
<comment type="mass spectrometry">
    <text>Monoisotopic mass with either 6 methylation modifications or 1 acetylation and 3 methylation modifications.</text>
</comment>
<comment type="miscellaneous">
    <text evidence="4">Present with 68500 molecules/cell in log phase SD medium.</text>
</comment>
<comment type="miscellaneous">
    <text evidence="11">There are 2 genes for uL11 in yeast.</text>
</comment>
<comment type="similarity">
    <text evidence="11">Belongs to the universal ribosomal protein uL11 family.</text>
</comment>
<reference key="1">
    <citation type="journal article" date="1990" name="Nucleic Acids Res.">
        <title>The 26S rRNA binding ribosomal protein equivalent to bacterial protein L11 is encoded by unspliced duplicated genes in Saccharomyces cerevisiae.</title>
        <authorList>
            <person name="Pucciarelli G."/>
            <person name="Remacha M."/>
            <person name="Ballesta J.P.G."/>
        </authorList>
    </citation>
    <scope>NUCLEOTIDE SEQUENCE [GENOMIC DNA]</scope>
    <source>
        <strain>Y166</strain>
    </source>
</reference>
<reference key="2">
    <citation type="journal article" date="1997" name="Nature">
        <title>The nucleotide sequence of Saccharomyces cerevisiae chromosome V.</title>
        <authorList>
            <person name="Dietrich F.S."/>
            <person name="Mulligan J.T."/>
            <person name="Hennessy K.M."/>
            <person name="Yelton M.A."/>
            <person name="Allen E."/>
            <person name="Araujo R."/>
            <person name="Aviles E."/>
            <person name="Berno A."/>
            <person name="Brennan T."/>
            <person name="Carpenter J."/>
            <person name="Chen E."/>
            <person name="Cherry J.M."/>
            <person name="Chung E."/>
            <person name="Duncan M."/>
            <person name="Guzman E."/>
            <person name="Hartzell G."/>
            <person name="Hunicke-Smith S."/>
            <person name="Hyman R.W."/>
            <person name="Kayser A."/>
            <person name="Komp C."/>
            <person name="Lashkari D."/>
            <person name="Lew H."/>
            <person name="Lin D."/>
            <person name="Mosedale D."/>
            <person name="Nakahara K."/>
            <person name="Namath A."/>
            <person name="Norgren R."/>
            <person name="Oefner P."/>
            <person name="Oh C."/>
            <person name="Petel F.X."/>
            <person name="Roberts D."/>
            <person name="Sehl P."/>
            <person name="Schramm S."/>
            <person name="Shogren T."/>
            <person name="Smith V."/>
            <person name="Taylor P."/>
            <person name="Wei Y."/>
            <person name="Botstein D."/>
            <person name="Davis R.W."/>
        </authorList>
    </citation>
    <scope>NUCLEOTIDE SEQUENCE [LARGE SCALE GENOMIC DNA]</scope>
    <source>
        <strain>ATCC 204508 / S288c</strain>
    </source>
</reference>
<reference key="3">
    <citation type="journal article" date="2014" name="G3 (Bethesda)">
        <title>The reference genome sequence of Saccharomyces cerevisiae: Then and now.</title>
        <authorList>
            <person name="Engel S.R."/>
            <person name="Dietrich F.S."/>
            <person name="Fisk D.G."/>
            <person name="Binkley G."/>
            <person name="Balakrishnan R."/>
            <person name="Costanzo M.C."/>
            <person name="Dwight S.S."/>
            <person name="Hitz B.C."/>
            <person name="Karra K."/>
            <person name="Nash R.S."/>
            <person name="Weng S."/>
            <person name="Wong E.D."/>
            <person name="Lloyd P."/>
            <person name="Skrzypek M.S."/>
            <person name="Miyasato S.R."/>
            <person name="Simison M."/>
            <person name="Cherry J.M."/>
        </authorList>
    </citation>
    <scope>GENOME REANNOTATION</scope>
    <source>
        <strain>ATCC 204508 / S288c</strain>
    </source>
</reference>
<reference key="4">
    <citation type="journal article" date="2007" name="Genome Res.">
        <title>Approaching a complete repository of sequence-verified protein-encoding clones for Saccharomyces cerevisiae.</title>
        <authorList>
            <person name="Hu Y."/>
            <person name="Rolfs A."/>
            <person name="Bhullar B."/>
            <person name="Murthy T.V.S."/>
            <person name="Zhu C."/>
            <person name="Berger M.F."/>
            <person name="Camargo A.A."/>
            <person name="Kelley F."/>
            <person name="McCarron S."/>
            <person name="Jepson D."/>
            <person name="Richardson A."/>
            <person name="Raphael J."/>
            <person name="Moreira D."/>
            <person name="Taycher E."/>
            <person name="Zuo D."/>
            <person name="Mohr S."/>
            <person name="Kane M.F."/>
            <person name="Williamson J."/>
            <person name="Simpson A.J.G."/>
            <person name="Bulyk M.L."/>
            <person name="Harlow E."/>
            <person name="Marsischky G."/>
            <person name="Kolodner R.D."/>
            <person name="LaBaer J."/>
        </authorList>
    </citation>
    <scope>NUCLEOTIDE SEQUENCE [GENOMIC DNA]</scope>
    <source>
        <strain>ATCC 204508 / S288c</strain>
    </source>
</reference>
<reference key="5">
    <citation type="journal article" date="2006" name="J. Biol. Chem.">
        <title>A novel SET domain methyltransferase in yeast: Rkm2-dependent trimethylation of ribosomal protein L12ab at lysine 10.</title>
        <authorList>
            <person name="Porras-Yakushi T.R."/>
            <person name="Whitelegge J.P."/>
            <person name="Clarke S."/>
        </authorList>
    </citation>
    <scope>PROTEIN SEQUENCE OF 2-16</scope>
    <scope>METHYLATION AT LYS-4</scope>
    <scope>METHYLATION AT LYS-11 BY RKM2</scope>
    <scope>IDENTIFICATION BY MASS SPECTROMETRY</scope>
</reference>
<reference key="6">
    <citation type="journal article" date="1984" name="Mol. Gen. Genet.">
        <title>Yeast ribosomal proteins. VIII. Isolation of two proteins and sequence characterization of twenty-four proteins from cytoplasmic ribosomes.</title>
        <authorList>
            <person name="Otaka E."/>
            <person name="Higo K."/>
            <person name="Itoh T."/>
        </authorList>
    </citation>
    <scope>PARTIAL PROTEIN SEQUENCE OF 17-36</scope>
</reference>
<reference key="7">
    <citation type="journal article" date="1998" name="Yeast">
        <title>The list of cytoplasmic ribosomal proteins of Saccharomyces cerevisiae.</title>
        <authorList>
            <person name="Planta R.J."/>
            <person name="Mager W.H."/>
        </authorList>
    </citation>
    <scope>NOMENCLATURE</scope>
    <scope>SUBUNIT</scope>
</reference>
<reference key="8">
    <citation type="journal article" date="2002" name="J. Biol. Chem.">
        <title>Yeast ribosomal protein L12 is a substrate of protein-arginine methyltransferase 2.</title>
        <authorList>
            <person name="Chern M.-K."/>
            <person name="Chang K.-N."/>
            <person name="Liu L.-F."/>
            <person name="Tam T.-C.S."/>
            <person name="Liu Y.-C."/>
            <person name="Liang Y.-L."/>
            <person name="Tam M.F."/>
        </authorList>
    </citation>
    <scope>IDENTIFICATION BY MASS SPECTROMETRY</scope>
    <scope>METHYLATION AT ARG-67</scope>
    <scope>MUTAGENESIS OF ARG-67</scope>
</reference>
<reference key="9">
    <citation type="journal article" date="2002" name="Proc. Natl. Acad. Sci. U.S.A.">
        <title>Direct mass spectrometric analysis of intact proteins of the yeast large ribosomal subunit using capillary LC/FTICR.</title>
        <authorList>
            <person name="Lee S.-W."/>
            <person name="Berger S.J."/>
            <person name="Martinovic S."/>
            <person name="Pasa-Tolic L."/>
            <person name="Anderson G.A."/>
            <person name="Shen Y."/>
            <person name="Zhao R."/>
            <person name="Smith R.D."/>
        </authorList>
    </citation>
    <scope>MASS SPECTROMETRY</scope>
</reference>
<reference key="10">
    <citation type="journal article" date="2003" name="Nature">
        <title>Global analysis of protein localization in budding yeast.</title>
        <authorList>
            <person name="Huh W.-K."/>
            <person name="Falvo J.V."/>
            <person name="Gerke L.C."/>
            <person name="Carroll A.S."/>
            <person name="Howson R.W."/>
            <person name="Weissman J.S."/>
            <person name="O'Shea E.K."/>
        </authorList>
    </citation>
    <scope>SUBCELLULAR LOCATION [LARGE SCALE ANALYSIS]</scope>
</reference>
<reference key="11">
    <citation type="journal article" date="2003" name="Nature">
        <title>Global analysis of protein expression in yeast.</title>
        <authorList>
            <person name="Ghaemmaghami S."/>
            <person name="Huh W.-K."/>
            <person name="Bower K."/>
            <person name="Howson R.W."/>
            <person name="Belle A."/>
            <person name="Dephoure N."/>
            <person name="O'Shea E.K."/>
            <person name="Weissman J.S."/>
        </authorList>
    </citation>
    <scope>LEVEL OF PROTEIN EXPRESSION [LARGE SCALE ANALYSIS]</scope>
</reference>
<reference key="12">
    <citation type="journal article" date="2008" name="J. Biol. Chem.">
        <title>Identification of two SET domain proteins required for methylation of lysine residues in yeast ribosomal protein Rpl42ab.</title>
        <authorList>
            <person name="Webb K.J."/>
            <person name="Laganowsky A."/>
            <person name="Whitelegge J.P."/>
            <person name="Clarke S.G."/>
        </authorList>
    </citation>
    <scope>METHYLATION AT PRO-2 AND ARG-67</scope>
    <scope>METHYLATION AT LYS-4 BY RKM2</scope>
</reference>
<reference key="13">
    <citation type="journal article" date="2008" name="Mol. Cell. Proteomics">
        <title>A multidimensional chromatography technology for in-depth phosphoproteome analysis.</title>
        <authorList>
            <person name="Albuquerque C.P."/>
            <person name="Smolka M.B."/>
            <person name="Payne S.H."/>
            <person name="Bafna V."/>
            <person name="Eng J."/>
            <person name="Zhou H."/>
        </authorList>
    </citation>
    <scope>PHOSPHORYLATION [LARGE SCALE ANALYSIS] AT SER-38</scope>
    <scope>IDENTIFICATION BY MASS SPECTROMETRY [LARGE SCALE ANALYSIS]</scope>
</reference>
<reference key="14">
    <citation type="journal article" date="2009" name="Science">
        <title>Global analysis of Cdk1 substrate phosphorylation sites provides insights into evolution.</title>
        <authorList>
            <person name="Holt L.J."/>
            <person name="Tuch B.B."/>
            <person name="Villen J."/>
            <person name="Johnson A.D."/>
            <person name="Gygi S.P."/>
            <person name="Morgan D.O."/>
        </authorList>
    </citation>
    <scope>PHOSPHORYLATION [LARGE SCALE ANALYSIS] AT SER-25 AND SER-38</scope>
    <scope>IDENTIFICATION BY MASS SPECTROMETRY [LARGE SCALE ANALYSIS]</scope>
</reference>
<reference key="15">
    <citation type="journal article" date="2010" name="Biochemistry">
        <title>Identification of protein N-terminal methyltransferases in yeast and humans.</title>
        <authorList>
            <person name="Webb K.J."/>
            <person name="Lipson R.S."/>
            <person name="Al-Hadid Q."/>
            <person name="Whitelegge J.P."/>
            <person name="Clarke S.G."/>
        </authorList>
    </citation>
    <scope>METHYLATION AT PRO-2 BY NTM1/TAE1</scope>
</reference>
<reference key="16">
    <citation type="journal article" date="2011" name="Science">
        <title>The structure of the eukaryotic ribosome at 3.0 A resolution.</title>
        <authorList>
            <person name="Ben-Shem A."/>
            <person name="Garreau de Loubresse N."/>
            <person name="Melnikov S."/>
            <person name="Jenner L."/>
            <person name="Yusupova G."/>
            <person name="Yusupov M."/>
        </authorList>
    </citation>
    <scope>SUBUNIT</scope>
    <scope>SUBCELLULAR LOCATION</scope>
</reference>
<reference key="17">
    <citation type="journal article" date="2012" name="Proteomics">
        <title>Sites of ubiquitin attachment in Saccharomyces cerevisiae.</title>
        <authorList>
            <person name="Starita L.M."/>
            <person name="Lo R.S."/>
            <person name="Eng J.K."/>
            <person name="von Haller P.D."/>
            <person name="Fields S."/>
        </authorList>
    </citation>
    <scope>UBIQUITINATION [LARGE SCALE ANALYSIS] AT LYS-130 AND LYS-146</scope>
    <scope>IDENTIFICATION BY MASS SPECTROMETRY [LARGE SCALE ANALYSIS]</scope>
</reference>
<reference key="18">
    <citation type="journal article" date="2014" name="Curr. Opin. Struct. Biol.">
        <title>A new system for naming ribosomal proteins.</title>
        <authorList>
            <person name="Ban N."/>
            <person name="Beckmann R."/>
            <person name="Cate J.H.D."/>
            <person name="Dinman J.D."/>
            <person name="Dragon F."/>
            <person name="Ellis S.R."/>
            <person name="Lafontaine D.L.J."/>
            <person name="Lindahl L."/>
            <person name="Liljas A."/>
            <person name="Lipton J.M."/>
            <person name="McAlear M.A."/>
            <person name="Moore P.B."/>
            <person name="Noller H.F."/>
            <person name="Ortega J."/>
            <person name="Panse V.G."/>
            <person name="Ramakrishnan V."/>
            <person name="Spahn C.M.T."/>
            <person name="Steitz T.A."/>
            <person name="Tchorzewski M."/>
            <person name="Tollervey D."/>
            <person name="Warren A.J."/>
            <person name="Williamson J.R."/>
            <person name="Wilson D."/>
            <person name="Yonath A."/>
            <person name="Yusupov M."/>
        </authorList>
    </citation>
    <scope>NOMENCLATURE</scope>
</reference>
<reference key="19">
    <citation type="journal article" date="2001" name="Cell">
        <title>Structure of the 80S ribosome from Saccharomyces cerevisiae -- tRNA-ribosome and subunit-subunit interactions.</title>
        <authorList>
            <person name="Spahn C.M.T."/>
            <person name="Beckmann R."/>
            <person name="Eswar N."/>
            <person name="Penczek P.A."/>
            <person name="Sali A."/>
            <person name="Blobel G."/>
            <person name="Frank J."/>
        </authorList>
    </citation>
    <scope>3D-STRUCTURE MODELING OF 13-143</scope>
    <scope>ELECTRON MICROSCOPY</scope>
</reference>
<reference key="20">
    <citation type="journal article" date="2004" name="EMBO J.">
        <title>Domain movements of elongation factor eEF2 and the eukaryotic 80S ribosome facilitate tRNA translocation.</title>
        <authorList>
            <person name="Spahn C.M.T."/>
            <person name="Gomez-Lorenzo M.G."/>
            <person name="Grassucci R.A."/>
            <person name="Joergensen R."/>
            <person name="Andersen G.R."/>
            <person name="Beckmann R."/>
            <person name="Penczek P.A."/>
            <person name="Ballesta J.P.G."/>
            <person name="Frank J."/>
        </authorList>
    </citation>
    <scope>3D-STRUCTURE MODELING OF 13-143</scope>
    <scope>ELECTRON MICROSCOPY</scope>
</reference>
<reference key="21">
    <citation type="journal article" date="2010" name="Science">
        <title>Crystal structure of the eukaryotic ribosome.</title>
        <authorList>
            <person name="Ben-Shem A."/>
            <person name="Jenner L."/>
            <person name="Yusupova G."/>
            <person name="Yusupov M."/>
        </authorList>
    </citation>
    <scope>X-RAY CRYSTALLOGRAPHY (4.00 ANGSTROMS) OF 80S RIBOSOME</scope>
</reference>
<proteinExistence type="evidence at protein level"/>
<feature type="initiator methionine" description="Removed" evidence="5">
    <location>
        <position position="1"/>
    </location>
</feature>
<feature type="chain" id="PRO_0000104467" description="Large ribosomal subunit protein uL11A">
    <location>
        <begin position="2"/>
        <end position="165"/>
    </location>
</feature>
<feature type="modified residue" description="N,N-dimethylproline; by NTM1" evidence="6 7">
    <location>
        <position position="2"/>
    </location>
</feature>
<feature type="modified residue" description="N6,N6,N6-trimethyllysine; by RKM2" evidence="5 6">
    <location>
        <position position="4"/>
    </location>
</feature>
<feature type="modified residue" description="N6,N6,N6-trimethyllysine; by RKM2" evidence="5">
    <location>
        <position position="11"/>
    </location>
</feature>
<feature type="modified residue" description="Phosphoserine" evidence="15">
    <location>
        <position position="25"/>
    </location>
</feature>
<feature type="modified residue" description="Phosphoserine" evidence="14 15">
    <location>
        <position position="38"/>
    </location>
</feature>
<feature type="modified residue" description="N5-methylarginine; by RMT2" evidence="1 6">
    <location>
        <position position="67"/>
    </location>
</feature>
<feature type="cross-link" description="Glycyl lysine isopeptide (Lys-Gly) (interchain with G-Cter in ubiquitin)" evidence="16">
    <location>
        <position position="130"/>
    </location>
</feature>
<feature type="cross-link" description="Glycyl lysine isopeptide (Lys-Gly) (interchain with G-Cter in ubiquitin)" evidence="16">
    <location>
        <position position="146"/>
    </location>
</feature>
<feature type="mutagenesis site" description="Abolishes monomethylation by RMT2." evidence="1">
    <original>R</original>
    <variation>K</variation>
    <location>
        <position position="67"/>
    </location>
</feature>
<accession>P0CX53</accession>
<accession>D3DLJ6</accession>
<accession>P05741</accession>
<accession>P17079</accession>
<protein>
    <recommendedName>
        <fullName evidence="9">Large ribosomal subunit protein uL11A</fullName>
    </recommendedName>
    <alternativeName>
        <fullName evidence="10">60S ribosomal protein L12-A</fullName>
    </alternativeName>
    <alternativeName>
        <fullName>L15</fullName>
    </alternativeName>
    <alternativeName>
        <fullName>YL23</fullName>
    </alternativeName>
</protein>
<keyword id="KW-0002">3D-structure</keyword>
<keyword id="KW-0963">Cytoplasm</keyword>
<keyword id="KW-0903">Direct protein sequencing</keyword>
<keyword id="KW-1017">Isopeptide bond</keyword>
<keyword id="KW-0488">Methylation</keyword>
<keyword id="KW-0597">Phosphoprotein</keyword>
<keyword id="KW-1185">Reference proteome</keyword>
<keyword id="KW-0687">Ribonucleoprotein</keyword>
<keyword id="KW-0689">Ribosomal protein</keyword>
<keyword id="KW-0694">RNA-binding</keyword>
<keyword id="KW-0832">Ubl conjugation</keyword>
<sequence>MPPKFDPNEVKYLYLRAVGGEVGASAALAPKIGPLGLSPKKVGEDIAKATKEFKGIKVTVQLKIQNRQAAASVVPSASSLVITALKEPPRDRKKDKNVKHSGNIQLDEIIEIARQMRDKSFGRTLASVTKEILGTAQSVGCRVDFKNPHDIIEGINAGEIEIPEN</sequence>
<gene>
    <name evidence="10" type="primary">RPL12A</name>
    <name type="synonym">RPL15B</name>
    <name type="ordered locus">YEL054C</name>
</gene>